<reference key="1">
    <citation type="journal article" date="2004" name="Proc. Natl. Acad. Sci. U.S.A.">
        <title>The louse-borne human pathogen Bartonella quintana is a genomic derivative of the zoonotic agent Bartonella henselae.</title>
        <authorList>
            <person name="Alsmark U.C.M."/>
            <person name="Frank A.C."/>
            <person name="Karlberg E.O."/>
            <person name="Legault B.-A."/>
            <person name="Ardell D.H."/>
            <person name="Canbaeck B."/>
            <person name="Eriksson A.-S."/>
            <person name="Naeslund A.K."/>
            <person name="Handley S.A."/>
            <person name="Huvet M."/>
            <person name="La Scola B."/>
            <person name="Holmberg M."/>
            <person name="Andersson S.G.E."/>
        </authorList>
    </citation>
    <scope>NUCLEOTIDE SEQUENCE [LARGE SCALE GENOMIC DNA]</scope>
    <source>
        <strain>Toulouse</strain>
    </source>
</reference>
<gene>
    <name evidence="1" type="primary">ihfA</name>
    <name evidence="1" type="synonym">himA</name>
    <name type="ordered locus">BQ05490</name>
</gene>
<organism>
    <name type="scientific">Bartonella quintana (strain Toulouse)</name>
    <name type="common">Rochalimaea quintana</name>
    <dbReference type="NCBI Taxonomy" id="283165"/>
    <lineage>
        <taxon>Bacteria</taxon>
        <taxon>Pseudomonadati</taxon>
        <taxon>Pseudomonadota</taxon>
        <taxon>Alphaproteobacteria</taxon>
        <taxon>Hyphomicrobiales</taxon>
        <taxon>Bartonellaceae</taxon>
        <taxon>Bartonella</taxon>
    </lineage>
</organism>
<feature type="chain" id="PRO_1000060535" description="Integration host factor subunit alpha">
    <location>
        <begin position="1"/>
        <end position="104"/>
    </location>
</feature>
<accession>Q6FZZ9</accession>
<proteinExistence type="inferred from homology"/>
<sequence>MTSKTVTRADLASVVCRKVGLSHTESAALVELVLNEICNSLVRGEAVKLSSFATFQVRNKNERIGRNPKTGVEAPISPRRVVTFKAANVLKQRILNSHRARQKK</sequence>
<dbReference type="EMBL" id="BX897700">
    <property type="protein sequence ID" value="CAF26044.1"/>
    <property type="molecule type" value="Genomic_DNA"/>
</dbReference>
<dbReference type="RefSeq" id="WP_011179318.1">
    <property type="nucleotide sequence ID" value="NC_005955.1"/>
</dbReference>
<dbReference type="SMR" id="Q6FZZ9"/>
<dbReference type="GeneID" id="56533085"/>
<dbReference type="KEGG" id="bqu:BQ05490"/>
<dbReference type="eggNOG" id="COG0776">
    <property type="taxonomic scope" value="Bacteria"/>
</dbReference>
<dbReference type="HOGENOM" id="CLU_105066_1_1_5"/>
<dbReference type="OrthoDB" id="9797747at2"/>
<dbReference type="Proteomes" id="UP000000597">
    <property type="component" value="Chromosome"/>
</dbReference>
<dbReference type="GO" id="GO:0005829">
    <property type="term" value="C:cytosol"/>
    <property type="evidence" value="ECO:0007669"/>
    <property type="project" value="TreeGrafter"/>
</dbReference>
<dbReference type="GO" id="GO:0003677">
    <property type="term" value="F:DNA binding"/>
    <property type="evidence" value="ECO:0007669"/>
    <property type="project" value="UniProtKB-UniRule"/>
</dbReference>
<dbReference type="GO" id="GO:0030527">
    <property type="term" value="F:structural constituent of chromatin"/>
    <property type="evidence" value="ECO:0007669"/>
    <property type="project" value="InterPro"/>
</dbReference>
<dbReference type="GO" id="GO:0006310">
    <property type="term" value="P:DNA recombination"/>
    <property type="evidence" value="ECO:0007669"/>
    <property type="project" value="UniProtKB-UniRule"/>
</dbReference>
<dbReference type="GO" id="GO:0009893">
    <property type="term" value="P:positive regulation of metabolic process"/>
    <property type="evidence" value="ECO:0007669"/>
    <property type="project" value="UniProtKB-ARBA"/>
</dbReference>
<dbReference type="GO" id="GO:0006355">
    <property type="term" value="P:regulation of DNA-templated transcription"/>
    <property type="evidence" value="ECO:0007669"/>
    <property type="project" value="UniProtKB-UniRule"/>
</dbReference>
<dbReference type="GO" id="GO:0006417">
    <property type="term" value="P:regulation of translation"/>
    <property type="evidence" value="ECO:0007669"/>
    <property type="project" value="UniProtKB-UniRule"/>
</dbReference>
<dbReference type="CDD" id="cd13835">
    <property type="entry name" value="IHF_A"/>
    <property type="match status" value="1"/>
</dbReference>
<dbReference type="Gene3D" id="4.10.520.10">
    <property type="entry name" value="IHF-like DNA-binding proteins"/>
    <property type="match status" value="1"/>
</dbReference>
<dbReference type="HAMAP" id="MF_00380">
    <property type="entry name" value="IHF_alpha"/>
    <property type="match status" value="1"/>
</dbReference>
<dbReference type="InterPro" id="IPR000119">
    <property type="entry name" value="Hist_DNA-bd"/>
</dbReference>
<dbReference type="InterPro" id="IPR020816">
    <property type="entry name" value="Histone-like_DNA-bd_CS"/>
</dbReference>
<dbReference type="InterPro" id="IPR010992">
    <property type="entry name" value="IHF-like_DNA-bd_dom_sf"/>
</dbReference>
<dbReference type="InterPro" id="IPR005684">
    <property type="entry name" value="IHF_alpha"/>
</dbReference>
<dbReference type="NCBIfam" id="NF001401">
    <property type="entry name" value="PRK00285.1"/>
    <property type="match status" value="1"/>
</dbReference>
<dbReference type="PANTHER" id="PTHR33175">
    <property type="entry name" value="DNA-BINDING PROTEIN HU"/>
    <property type="match status" value="1"/>
</dbReference>
<dbReference type="PANTHER" id="PTHR33175:SF2">
    <property type="entry name" value="INTEGRATION HOST FACTOR SUBUNIT ALPHA"/>
    <property type="match status" value="1"/>
</dbReference>
<dbReference type="Pfam" id="PF00216">
    <property type="entry name" value="Bac_DNA_binding"/>
    <property type="match status" value="1"/>
</dbReference>
<dbReference type="PRINTS" id="PR01727">
    <property type="entry name" value="DNABINDINGHU"/>
</dbReference>
<dbReference type="SMART" id="SM00411">
    <property type="entry name" value="BHL"/>
    <property type="match status" value="1"/>
</dbReference>
<dbReference type="SUPFAM" id="SSF47729">
    <property type="entry name" value="IHF-like DNA-binding proteins"/>
    <property type="match status" value="1"/>
</dbReference>
<dbReference type="PROSITE" id="PS00045">
    <property type="entry name" value="HISTONE_LIKE"/>
    <property type="match status" value="1"/>
</dbReference>
<keyword id="KW-0233">DNA recombination</keyword>
<keyword id="KW-0238">DNA-binding</keyword>
<keyword id="KW-0804">Transcription</keyword>
<keyword id="KW-0805">Transcription regulation</keyword>
<keyword id="KW-0810">Translation regulation</keyword>
<protein>
    <recommendedName>
        <fullName evidence="1">Integration host factor subunit alpha</fullName>
        <shortName evidence="1">IHF-alpha</shortName>
    </recommendedName>
</protein>
<comment type="function">
    <text evidence="1">This protein is one of the two subunits of integration host factor, a specific DNA-binding protein that functions in genetic recombination as well as in transcriptional and translational control.</text>
</comment>
<comment type="subunit">
    <text evidence="1">Heterodimer of an alpha and a beta chain.</text>
</comment>
<comment type="similarity">
    <text evidence="1">Belongs to the bacterial histone-like protein family.</text>
</comment>
<evidence type="ECO:0000255" key="1">
    <source>
        <dbReference type="HAMAP-Rule" id="MF_00380"/>
    </source>
</evidence>
<name>IHFA_BARQU</name>